<reference key="1">
    <citation type="journal article" date="2000" name="Nature">
        <title>Complete genome sequence of Pseudomonas aeruginosa PAO1, an opportunistic pathogen.</title>
        <authorList>
            <person name="Stover C.K."/>
            <person name="Pham X.-Q.T."/>
            <person name="Erwin A.L."/>
            <person name="Mizoguchi S.D."/>
            <person name="Warrener P."/>
            <person name="Hickey M.J."/>
            <person name="Brinkman F.S.L."/>
            <person name="Hufnagle W.O."/>
            <person name="Kowalik D.J."/>
            <person name="Lagrou M."/>
            <person name="Garber R.L."/>
            <person name="Goltry L."/>
            <person name="Tolentino E."/>
            <person name="Westbrock-Wadman S."/>
            <person name="Yuan Y."/>
            <person name="Brody L.L."/>
            <person name="Coulter S.N."/>
            <person name="Folger K.R."/>
            <person name="Kas A."/>
            <person name="Larbig K."/>
            <person name="Lim R.M."/>
            <person name="Smith K.A."/>
            <person name="Spencer D.H."/>
            <person name="Wong G.K.-S."/>
            <person name="Wu Z."/>
            <person name="Paulsen I.T."/>
            <person name="Reizer J."/>
            <person name="Saier M.H. Jr."/>
            <person name="Hancock R.E.W."/>
            <person name="Lory S."/>
            <person name="Olson M.V."/>
        </authorList>
    </citation>
    <scope>NUCLEOTIDE SEQUENCE [LARGE SCALE GENOMIC DNA]</scope>
    <source>
        <strain>ATCC 15692 / DSM 22644 / CIP 104116 / JCM 14847 / LMG 12228 / 1C / PRS 101 / PAO1</strain>
    </source>
</reference>
<accession>Q9I2A8</accession>
<comment type="catalytic activity">
    <reaction evidence="2">
        <text>2 acetyl-CoA = acetoacetyl-CoA + CoA</text>
        <dbReference type="Rhea" id="RHEA:21036"/>
        <dbReference type="ChEBI" id="CHEBI:57286"/>
        <dbReference type="ChEBI" id="CHEBI:57287"/>
        <dbReference type="ChEBI" id="CHEBI:57288"/>
        <dbReference type="EC" id="2.3.1.9"/>
    </reaction>
</comment>
<comment type="pathway">
    <text>Metabolic intermediate biosynthesis; (R)-mevalonate biosynthesis; (R)-mevalonate from acetyl-CoA: step 1/3.</text>
</comment>
<comment type="subcellular location">
    <subcellularLocation>
        <location evidence="3">Cytoplasm</location>
    </subcellularLocation>
</comment>
<comment type="similarity">
    <text evidence="3">Belongs to the thiolase-like superfamily. Thiolase family.</text>
</comment>
<name>ATOB_PSEAE</name>
<sequence length="393" mass="40405">MQDVVIVAATRTAVGSFQGSLAGIPAPELGAAVIRRLLEQTGLDAGQVDEVILGQVLTAGSGQNPARQAAIKAGLPVGVPAMTLNKVCGSGLKALHLGAQAIRCGDAEVIVAGGQENMSLAPYVMPGARTGLRMGHAKLVDSMIEDGLWDAFNDYHMGITAENLAEKYGLTREEQDAFAAASQQKAIAAIEGGRFRDEITPIQVPQRKGEPLGFDTDEQPRAGTTVEALAKLKPAFRKDGSVTAGNASSLNDGAAAVLLMSAAKAKALGLPVLARIASYASAGVDPAIMGIGPVSATRRALDKAGWSLEQLDLIEANEAFAAQSLAVGRELGWDAARVNVNGGAIALGHPIGASGCRVLVTLLHEMIRRDAKKGLATLCIGGGQGVALTLARD</sequence>
<gene>
    <name type="primary">atoB</name>
    <name type="ordered locus">PA2001</name>
</gene>
<dbReference type="EC" id="2.3.1.9"/>
<dbReference type="EMBL" id="AE004091">
    <property type="protein sequence ID" value="AAG05389.1"/>
    <property type="molecule type" value="Genomic_DNA"/>
</dbReference>
<dbReference type="PIR" id="C83396">
    <property type="entry name" value="C83396"/>
</dbReference>
<dbReference type="RefSeq" id="NP_250691.1">
    <property type="nucleotide sequence ID" value="NC_002516.2"/>
</dbReference>
<dbReference type="RefSeq" id="WP_003113500.1">
    <property type="nucleotide sequence ID" value="NC_002516.2"/>
</dbReference>
<dbReference type="PDB" id="8GQJ">
    <property type="method" value="X-ray"/>
    <property type="resolution" value="1.78 A"/>
    <property type="chains" value="A/B=1-393"/>
</dbReference>
<dbReference type="PDBsum" id="8GQJ"/>
<dbReference type="SMR" id="Q9I2A8"/>
<dbReference type="FunCoup" id="Q9I2A8">
    <property type="interactions" value="631"/>
</dbReference>
<dbReference type="STRING" id="208964.PA2001"/>
<dbReference type="PaxDb" id="208964-PA2001"/>
<dbReference type="DNASU" id="879046"/>
<dbReference type="GeneID" id="879046"/>
<dbReference type="KEGG" id="pae:PA2001"/>
<dbReference type="PATRIC" id="fig|208964.12.peg.2085"/>
<dbReference type="PseudoCAP" id="PA2001"/>
<dbReference type="HOGENOM" id="CLU_031026_0_0_6"/>
<dbReference type="InParanoid" id="Q9I2A8"/>
<dbReference type="OrthoDB" id="9764638at2"/>
<dbReference type="PhylomeDB" id="Q9I2A8"/>
<dbReference type="BioCyc" id="PAER208964:G1FZ6-2039-MONOMER"/>
<dbReference type="UniPathway" id="UPA00058">
    <property type="reaction ID" value="UER00101"/>
</dbReference>
<dbReference type="Proteomes" id="UP000002438">
    <property type="component" value="Chromosome"/>
</dbReference>
<dbReference type="GO" id="GO:0005737">
    <property type="term" value="C:cytoplasm"/>
    <property type="evidence" value="ECO:0007669"/>
    <property type="project" value="UniProtKB-SubCell"/>
</dbReference>
<dbReference type="GO" id="GO:0003985">
    <property type="term" value="F:acetyl-CoA C-acetyltransferase activity"/>
    <property type="evidence" value="ECO:0000318"/>
    <property type="project" value="GO_Central"/>
</dbReference>
<dbReference type="GO" id="GO:0006631">
    <property type="term" value="P:fatty acid metabolic process"/>
    <property type="evidence" value="ECO:0007669"/>
    <property type="project" value="UniProtKB-KW"/>
</dbReference>
<dbReference type="CDD" id="cd00751">
    <property type="entry name" value="thiolase"/>
    <property type="match status" value="1"/>
</dbReference>
<dbReference type="FunFam" id="3.40.47.10:FF:000010">
    <property type="entry name" value="Acetyl-CoA acetyltransferase (Thiolase)"/>
    <property type="match status" value="1"/>
</dbReference>
<dbReference type="Gene3D" id="3.40.47.10">
    <property type="match status" value="2"/>
</dbReference>
<dbReference type="InterPro" id="IPR002155">
    <property type="entry name" value="Thiolase"/>
</dbReference>
<dbReference type="InterPro" id="IPR016039">
    <property type="entry name" value="Thiolase-like"/>
</dbReference>
<dbReference type="InterPro" id="IPR020615">
    <property type="entry name" value="Thiolase_acyl_enz_int_AS"/>
</dbReference>
<dbReference type="InterPro" id="IPR020610">
    <property type="entry name" value="Thiolase_AS"/>
</dbReference>
<dbReference type="InterPro" id="IPR020617">
    <property type="entry name" value="Thiolase_C"/>
</dbReference>
<dbReference type="InterPro" id="IPR020613">
    <property type="entry name" value="Thiolase_CS"/>
</dbReference>
<dbReference type="InterPro" id="IPR020616">
    <property type="entry name" value="Thiolase_N"/>
</dbReference>
<dbReference type="NCBIfam" id="TIGR01930">
    <property type="entry name" value="AcCoA-C-Actrans"/>
    <property type="match status" value="1"/>
</dbReference>
<dbReference type="NCBIfam" id="NF004206">
    <property type="entry name" value="PRK05656.1"/>
    <property type="match status" value="1"/>
</dbReference>
<dbReference type="PANTHER" id="PTHR18919:SF107">
    <property type="entry name" value="ACETYL-COA ACETYLTRANSFERASE, CYTOSOLIC"/>
    <property type="match status" value="1"/>
</dbReference>
<dbReference type="PANTHER" id="PTHR18919">
    <property type="entry name" value="ACETYL-COA C-ACYLTRANSFERASE"/>
    <property type="match status" value="1"/>
</dbReference>
<dbReference type="Pfam" id="PF02803">
    <property type="entry name" value="Thiolase_C"/>
    <property type="match status" value="1"/>
</dbReference>
<dbReference type="Pfam" id="PF00108">
    <property type="entry name" value="Thiolase_N"/>
    <property type="match status" value="1"/>
</dbReference>
<dbReference type="PIRSF" id="PIRSF000429">
    <property type="entry name" value="Ac-CoA_Ac_transf"/>
    <property type="match status" value="1"/>
</dbReference>
<dbReference type="SUPFAM" id="SSF53901">
    <property type="entry name" value="Thiolase-like"/>
    <property type="match status" value="2"/>
</dbReference>
<dbReference type="PROSITE" id="PS00098">
    <property type="entry name" value="THIOLASE_1"/>
    <property type="match status" value="1"/>
</dbReference>
<dbReference type="PROSITE" id="PS00737">
    <property type="entry name" value="THIOLASE_2"/>
    <property type="match status" value="1"/>
</dbReference>
<dbReference type="PROSITE" id="PS00099">
    <property type="entry name" value="THIOLASE_3"/>
    <property type="match status" value="1"/>
</dbReference>
<proteinExistence type="evidence at protein level"/>
<evidence type="ECO:0000250" key="1"/>
<evidence type="ECO:0000255" key="2">
    <source>
        <dbReference type="PROSITE-ProRule" id="PRU10020"/>
    </source>
</evidence>
<evidence type="ECO:0000305" key="3"/>
<keyword id="KW-0002">3D-structure</keyword>
<keyword id="KW-0012">Acyltransferase</keyword>
<keyword id="KW-0963">Cytoplasm</keyword>
<keyword id="KW-0276">Fatty acid metabolism</keyword>
<keyword id="KW-0443">Lipid metabolism</keyword>
<keyword id="KW-1185">Reference proteome</keyword>
<keyword id="KW-0808">Transferase</keyword>
<organism>
    <name type="scientific">Pseudomonas aeruginosa (strain ATCC 15692 / DSM 22644 / CIP 104116 / JCM 14847 / LMG 12228 / 1C / PRS 101 / PAO1)</name>
    <dbReference type="NCBI Taxonomy" id="208964"/>
    <lineage>
        <taxon>Bacteria</taxon>
        <taxon>Pseudomonadati</taxon>
        <taxon>Pseudomonadota</taxon>
        <taxon>Gammaproteobacteria</taxon>
        <taxon>Pseudomonadales</taxon>
        <taxon>Pseudomonadaceae</taxon>
        <taxon>Pseudomonas</taxon>
    </lineage>
</organism>
<feature type="chain" id="PRO_0000287828" description="Acetyl-CoA acetyltransferase">
    <location>
        <begin position="1"/>
        <end position="393"/>
    </location>
</feature>
<feature type="active site" description="Acyl-thioester intermediate" evidence="1">
    <location>
        <position position="88"/>
    </location>
</feature>
<feature type="active site" description="Proton acceptor" evidence="2">
    <location>
        <position position="349"/>
    </location>
</feature>
<feature type="active site" description="Proton acceptor" evidence="2">
    <location>
        <position position="379"/>
    </location>
</feature>
<protein>
    <recommendedName>
        <fullName>Acetyl-CoA acetyltransferase</fullName>
        <ecNumber>2.3.1.9</ecNumber>
    </recommendedName>
    <alternativeName>
        <fullName>Acetoacetyl-CoA thiolase</fullName>
    </alternativeName>
</protein>